<protein>
    <recommendedName>
        <fullName>UPF0437 protein Ava_4254</fullName>
    </recommendedName>
</protein>
<comment type="similarity">
    <text evidence="1">Belongs to the UPF0437 family.</text>
</comment>
<comment type="sequence caution" evidence="1">
    <conflict type="erroneous initiation">
        <sequence resource="EMBL-CDS" id="ABA23853"/>
    </conflict>
</comment>
<proteinExistence type="inferred from homology"/>
<feature type="chain" id="PRO_0000208891" description="UPF0437 protein Ava_4254">
    <location>
        <begin position="1"/>
        <end position="86"/>
    </location>
</feature>
<accession>Q44491</accession>
<accession>Q3M583</accession>
<evidence type="ECO:0000305" key="1"/>
<dbReference type="EMBL" id="U49859">
    <property type="protein sequence ID" value="AAA93027.1"/>
    <property type="molecule type" value="Genomic_DNA"/>
</dbReference>
<dbReference type="EMBL" id="CP000117">
    <property type="protein sequence ID" value="ABA23853.1"/>
    <property type="status" value="ALT_INIT"/>
    <property type="molecule type" value="Genomic_DNA"/>
</dbReference>
<dbReference type="SMR" id="Q44491"/>
<dbReference type="STRING" id="240292.Ava_4254"/>
<dbReference type="KEGG" id="ava:Ava_4254"/>
<dbReference type="eggNOG" id="COG5420">
    <property type="taxonomic scope" value="Bacteria"/>
</dbReference>
<dbReference type="HOGENOM" id="CLU_187695_0_0_3"/>
<dbReference type="Proteomes" id="UP000002533">
    <property type="component" value="Chromosome"/>
</dbReference>
<dbReference type="GO" id="GO:0009399">
    <property type="term" value="P:nitrogen fixation"/>
    <property type="evidence" value="ECO:0007669"/>
    <property type="project" value="UniProtKB-KW"/>
</dbReference>
<dbReference type="Gene3D" id="1.10.287.660">
    <property type="entry name" value="Helix hairpin bin"/>
    <property type="match status" value="1"/>
</dbReference>
<dbReference type="InterPro" id="IPR029012">
    <property type="entry name" value="Helix_hairpin_bin_sf"/>
</dbReference>
<dbReference type="InterPro" id="IPR007774">
    <property type="entry name" value="Put_N_fixation"/>
</dbReference>
<dbReference type="Pfam" id="PF05082">
    <property type="entry name" value="Rop-like"/>
    <property type="match status" value="1"/>
</dbReference>
<organism>
    <name type="scientific">Trichormus variabilis (strain ATCC 29413 / PCC 7937)</name>
    <name type="common">Anabaena variabilis</name>
    <dbReference type="NCBI Taxonomy" id="240292"/>
    <lineage>
        <taxon>Bacteria</taxon>
        <taxon>Bacillati</taxon>
        <taxon>Cyanobacteriota</taxon>
        <taxon>Cyanophyceae</taxon>
        <taxon>Nostocales</taxon>
        <taxon>Nostocaceae</taxon>
        <taxon>Trichormus</taxon>
    </lineage>
</organism>
<reference key="1">
    <citation type="journal article" date="1995" name="Proc. Natl. Acad. Sci. U.S.A.">
        <title>A second nitrogenase in vegetative cells of a heterocyst-forming cyanobacterium.</title>
        <authorList>
            <person name="Thiel T."/>
            <person name="Lyons E.M."/>
            <person name="Erker J.C."/>
            <person name="Ernst A."/>
        </authorList>
    </citation>
    <scope>NUCLEOTIDE SEQUENCE [GENOMIC DNA]</scope>
</reference>
<reference key="2">
    <citation type="journal article" date="2014" name="Stand. Genomic Sci.">
        <title>Complete genome sequence of Anabaena variabilis ATCC 29413.</title>
        <authorList>
            <person name="Thiel T."/>
            <person name="Pratte B.S."/>
            <person name="Zhong J."/>
            <person name="Goodwin L."/>
            <person name="Copeland A."/>
            <person name="Lucas S."/>
            <person name="Han C."/>
            <person name="Pitluck S."/>
            <person name="Land M.L."/>
            <person name="Kyrpides N.C."/>
            <person name="Woyke T."/>
        </authorList>
    </citation>
    <scope>NUCLEOTIDE SEQUENCE [LARGE SCALE GENOMIC DNA]</scope>
    <source>
        <strain>ATCC 29413 / PCC 7937</strain>
    </source>
</reference>
<keyword id="KW-0535">Nitrogen fixation</keyword>
<gene>
    <name type="ordered locus">Ava_4254</name>
</gene>
<sequence length="86" mass="9805">MRSIMVQSAKTDSVNQQTIEGLKLQIKKLNSKAGQLKMDLHDLAEGLPIDYQNLTALAAETYEIYRHLDELKSQLKSLEKNHDMGY</sequence>
<name>Y4254_TRIV2</name>